<sequence length="465" mass="50297">MDFLPLFHSLQGRLALVVGGGEVALRKARLLADAGARLRVVAPQIHIELRHLVEQGGGELLERDYQDGDQPGCALIIAATDDEPLNAEVSRAANARGIPVNVVDAPALCSVIFPAIVDRSPLVVAVSSGGDAPVLARLIRAKLETWIPSSYGQLAGLASRFRNRVKELLPDLQQRRVFWENLFQGEIAERVLAGRPAEAERLLEERLAGGLAHMATGEVYLVGAGPGDPDLLTFRALRLMQQADVVLYDRLVAPAILELCRRDAERLYVGKRRAEHAVPQERINRLLVELASQGKRVLRLKGGDPFIFGRGGEEIDELAAHGIPFQVVPGITAASGCAAYAGIPLTHRDHAQSVRFVTGHLKDGTTDLPWKDLVAPGQTLVFYMGLVGLPVICEQLVAHGRSAQTPAALIQQGTTAQQRVFSGTLENLPQLVAEHEVHAPTLVIVGEVVQLRDKLAWFEGAREGA</sequence>
<dbReference type="EC" id="2.1.1.107" evidence="1"/>
<dbReference type="EC" id="1.3.1.76" evidence="1"/>
<dbReference type="EC" id="4.99.1.4" evidence="1"/>
<dbReference type="EMBL" id="CP000744">
    <property type="protein sequence ID" value="ABR83518.1"/>
    <property type="molecule type" value="Genomic_DNA"/>
</dbReference>
<dbReference type="RefSeq" id="WP_012075462.1">
    <property type="nucleotide sequence ID" value="NC_009656.1"/>
</dbReference>
<dbReference type="SMR" id="A6V4H6"/>
<dbReference type="GeneID" id="77220852"/>
<dbReference type="KEGG" id="pap:PSPA7_2597"/>
<dbReference type="HOGENOM" id="CLU_011276_2_1_6"/>
<dbReference type="UniPathway" id="UPA00148">
    <property type="reaction ID" value="UER00211"/>
</dbReference>
<dbReference type="UniPathway" id="UPA00148">
    <property type="reaction ID" value="UER00222"/>
</dbReference>
<dbReference type="UniPathway" id="UPA00262">
    <property type="reaction ID" value="UER00211"/>
</dbReference>
<dbReference type="UniPathway" id="UPA00262">
    <property type="reaction ID" value="UER00222"/>
</dbReference>
<dbReference type="UniPathway" id="UPA00262">
    <property type="reaction ID" value="UER00376"/>
</dbReference>
<dbReference type="Proteomes" id="UP000001582">
    <property type="component" value="Chromosome"/>
</dbReference>
<dbReference type="GO" id="GO:0051287">
    <property type="term" value="F:NAD binding"/>
    <property type="evidence" value="ECO:0007669"/>
    <property type="project" value="InterPro"/>
</dbReference>
<dbReference type="GO" id="GO:0043115">
    <property type="term" value="F:precorrin-2 dehydrogenase activity"/>
    <property type="evidence" value="ECO:0007669"/>
    <property type="project" value="UniProtKB-UniRule"/>
</dbReference>
<dbReference type="GO" id="GO:0051266">
    <property type="term" value="F:sirohydrochlorin ferrochelatase activity"/>
    <property type="evidence" value="ECO:0007669"/>
    <property type="project" value="UniProtKB-EC"/>
</dbReference>
<dbReference type="GO" id="GO:0004851">
    <property type="term" value="F:uroporphyrin-III C-methyltransferase activity"/>
    <property type="evidence" value="ECO:0007669"/>
    <property type="project" value="UniProtKB-UniRule"/>
</dbReference>
<dbReference type="GO" id="GO:0009236">
    <property type="term" value="P:cobalamin biosynthetic process"/>
    <property type="evidence" value="ECO:0007669"/>
    <property type="project" value="UniProtKB-UniRule"/>
</dbReference>
<dbReference type="GO" id="GO:0032259">
    <property type="term" value="P:methylation"/>
    <property type="evidence" value="ECO:0007669"/>
    <property type="project" value="UniProtKB-KW"/>
</dbReference>
<dbReference type="GO" id="GO:0019354">
    <property type="term" value="P:siroheme biosynthetic process"/>
    <property type="evidence" value="ECO:0007669"/>
    <property type="project" value="UniProtKB-UniRule"/>
</dbReference>
<dbReference type="CDD" id="cd11642">
    <property type="entry name" value="SUMT"/>
    <property type="match status" value="1"/>
</dbReference>
<dbReference type="FunFam" id="3.30.160.110:FF:000001">
    <property type="entry name" value="Siroheme synthase"/>
    <property type="match status" value="1"/>
</dbReference>
<dbReference type="FunFam" id="3.30.950.10:FF:000001">
    <property type="entry name" value="Siroheme synthase"/>
    <property type="match status" value="1"/>
</dbReference>
<dbReference type="FunFam" id="3.40.1010.10:FF:000001">
    <property type="entry name" value="Siroheme synthase"/>
    <property type="match status" value="1"/>
</dbReference>
<dbReference type="Gene3D" id="3.40.1010.10">
    <property type="entry name" value="Cobalt-precorrin-4 Transmethylase, Domain 1"/>
    <property type="match status" value="1"/>
</dbReference>
<dbReference type="Gene3D" id="3.30.950.10">
    <property type="entry name" value="Methyltransferase, Cobalt-precorrin-4 Transmethylase, Domain 2"/>
    <property type="match status" value="1"/>
</dbReference>
<dbReference type="Gene3D" id="3.40.50.720">
    <property type="entry name" value="NAD(P)-binding Rossmann-like Domain"/>
    <property type="match status" value="1"/>
</dbReference>
<dbReference type="Gene3D" id="1.10.8.210">
    <property type="entry name" value="Sirohaem synthase, dimerisation domain"/>
    <property type="match status" value="1"/>
</dbReference>
<dbReference type="Gene3D" id="3.30.160.110">
    <property type="entry name" value="Siroheme synthase, domain 2"/>
    <property type="match status" value="1"/>
</dbReference>
<dbReference type="HAMAP" id="MF_01646">
    <property type="entry name" value="Siroheme_synth"/>
    <property type="match status" value="1"/>
</dbReference>
<dbReference type="InterPro" id="IPR000878">
    <property type="entry name" value="4pyrrol_Mease"/>
</dbReference>
<dbReference type="InterPro" id="IPR035996">
    <property type="entry name" value="4pyrrol_Methylase_sf"/>
</dbReference>
<dbReference type="InterPro" id="IPR014777">
    <property type="entry name" value="4pyrrole_Mease_sub1"/>
</dbReference>
<dbReference type="InterPro" id="IPR014776">
    <property type="entry name" value="4pyrrole_Mease_sub2"/>
</dbReference>
<dbReference type="InterPro" id="IPR006366">
    <property type="entry name" value="CobA/CysG_C"/>
</dbReference>
<dbReference type="InterPro" id="IPR036291">
    <property type="entry name" value="NAD(P)-bd_dom_sf"/>
</dbReference>
<dbReference type="InterPro" id="IPR050161">
    <property type="entry name" value="Siro_Cobalamin_biosynth"/>
</dbReference>
<dbReference type="InterPro" id="IPR037115">
    <property type="entry name" value="Sirohaem_synt_dimer_dom_sf"/>
</dbReference>
<dbReference type="InterPro" id="IPR012409">
    <property type="entry name" value="Sirohaem_synth"/>
</dbReference>
<dbReference type="InterPro" id="IPR028281">
    <property type="entry name" value="Sirohaem_synthase_central"/>
</dbReference>
<dbReference type="InterPro" id="IPR019478">
    <property type="entry name" value="Sirohaem_synthase_dimer_dom"/>
</dbReference>
<dbReference type="InterPro" id="IPR006367">
    <property type="entry name" value="Sirohaem_synthase_N"/>
</dbReference>
<dbReference type="InterPro" id="IPR003043">
    <property type="entry name" value="Uropor_MeTrfase_CS"/>
</dbReference>
<dbReference type="NCBIfam" id="TIGR01469">
    <property type="entry name" value="cobA_cysG_Cterm"/>
    <property type="match status" value="1"/>
</dbReference>
<dbReference type="NCBIfam" id="TIGR01470">
    <property type="entry name" value="cysG_Nterm"/>
    <property type="match status" value="1"/>
</dbReference>
<dbReference type="NCBIfam" id="NF004790">
    <property type="entry name" value="PRK06136.1"/>
    <property type="match status" value="1"/>
</dbReference>
<dbReference type="NCBIfam" id="NF007922">
    <property type="entry name" value="PRK10637.1"/>
    <property type="match status" value="1"/>
</dbReference>
<dbReference type="PANTHER" id="PTHR45790:SF1">
    <property type="entry name" value="SIROHEME SYNTHASE"/>
    <property type="match status" value="1"/>
</dbReference>
<dbReference type="PANTHER" id="PTHR45790">
    <property type="entry name" value="SIROHEME SYNTHASE-RELATED"/>
    <property type="match status" value="1"/>
</dbReference>
<dbReference type="Pfam" id="PF10414">
    <property type="entry name" value="CysG_dimeriser"/>
    <property type="match status" value="1"/>
</dbReference>
<dbReference type="Pfam" id="PF13241">
    <property type="entry name" value="NAD_binding_7"/>
    <property type="match status" value="1"/>
</dbReference>
<dbReference type="Pfam" id="PF14824">
    <property type="entry name" value="Sirohm_synth_M"/>
    <property type="match status" value="1"/>
</dbReference>
<dbReference type="Pfam" id="PF00590">
    <property type="entry name" value="TP_methylase"/>
    <property type="match status" value="1"/>
</dbReference>
<dbReference type="PIRSF" id="PIRSF036426">
    <property type="entry name" value="Sirohaem_synth"/>
    <property type="match status" value="1"/>
</dbReference>
<dbReference type="SUPFAM" id="SSF51735">
    <property type="entry name" value="NAD(P)-binding Rossmann-fold domains"/>
    <property type="match status" value="1"/>
</dbReference>
<dbReference type="SUPFAM" id="SSF75615">
    <property type="entry name" value="Siroheme synthase middle domains-like"/>
    <property type="match status" value="1"/>
</dbReference>
<dbReference type="SUPFAM" id="SSF53790">
    <property type="entry name" value="Tetrapyrrole methylase"/>
    <property type="match status" value="1"/>
</dbReference>
<dbReference type="PROSITE" id="PS00840">
    <property type="entry name" value="SUMT_2"/>
    <property type="match status" value="1"/>
</dbReference>
<proteinExistence type="inferred from homology"/>
<comment type="function">
    <text evidence="1">Multifunctional enzyme that catalyzes the SAM-dependent methylations of uroporphyrinogen III at position C-2 and C-7 to form precorrin-2 via precorrin-1. Then it catalyzes the NAD-dependent ring dehydrogenation of precorrin-2 to yield sirohydrochlorin. Finally, it catalyzes the ferrochelation of sirohydrochlorin to yield siroheme.</text>
</comment>
<comment type="catalytic activity">
    <reaction evidence="1">
        <text>uroporphyrinogen III + 2 S-adenosyl-L-methionine = precorrin-2 + 2 S-adenosyl-L-homocysteine + H(+)</text>
        <dbReference type="Rhea" id="RHEA:32459"/>
        <dbReference type="ChEBI" id="CHEBI:15378"/>
        <dbReference type="ChEBI" id="CHEBI:57308"/>
        <dbReference type="ChEBI" id="CHEBI:57856"/>
        <dbReference type="ChEBI" id="CHEBI:58827"/>
        <dbReference type="ChEBI" id="CHEBI:59789"/>
        <dbReference type="EC" id="2.1.1.107"/>
    </reaction>
</comment>
<comment type="catalytic activity">
    <reaction evidence="1">
        <text>precorrin-2 + NAD(+) = sirohydrochlorin + NADH + 2 H(+)</text>
        <dbReference type="Rhea" id="RHEA:15613"/>
        <dbReference type="ChEBI" id="CHEBI:15378"/>
        <dbReference type="ChEBI" id="CHEBI:57540"/>
        <dbReference type="ChEBI" id="CHEBI:57945"/>
        <dbReference type="ChEBI" id="CHEBI:58351"/>
        <dbReference type="ChEBI" id="CHEBI:58827"/>
        <dbReference type="EC" id="1.3.1.76"/>
    </reaction>
</comment>
<comment type="catalytic activity">
    <reaction evidence="1">
        <text>siroheme + 2 H(+) = sirohydrochlorin + Fe(2+)</text>
        <dbReference type="Rhea" id="RHEA:24360"/>
        <dbReference type="ChEBI" id="CHEBI:15378"/>
        <dbReference type="ChEBI" id="CHEBI:29033"/>
        <dbReference type="ChEBI" id="CHEBI:58351"/>
        <dbReference type="ChEBI" id="CHEBI:60052"/>
        <dbReference type="EC" id="4.99.1.4"/>
    </reaction>
</comment>
<comment type="pathway">
    <text evidence="1">Cofactor biosynthesis; adenosylcobalamin biosynthesis; precorrin-2 from uroporphyrinogen III: step 1/1.</text>
</comment>
<comment type="pathway">
    <text evidence="1">Cofactor biosynthesis; adenosylcobalamin biosynthesis; sirohydrochlorin from precorrin-2: step 1/1.</text>
</comment>
<comment type="pathway">
    <text evidence="1">Porphyrin-containing compound metabolism; siroheme biosynthesis; precorrin-2 from uroporphyrinogen III: step 1/1.</text>
</comment>
<comment type="pathway">
    <text evidence="1">Porphyrin-containing compound metabolism; siroheme biosynthesis; siroheme from sirohydrochlorin: step 1/1.</text>
</comment>
<comment type="pathway">
    <text evidence="1">Porphyrin-containing compound metabolism; siroheme biosynthesis; sirohydrochlorin from precorrin-2: step 1/1.</text>
</comment>
<comment type="similarity">
    <text evidence="1">In the N-terminal section; belongs to the precorrin-2 dehydrogenase / sirohydrochlorin ferrochelatase family.</text>
</comment>
<comment type="similarity">
    <text evidence="1">In the C-terminal section; belongs to the precorrin methyltransferase family.</text>
</comment>
<feature type="chain" id="PRO_0000330534" description="Siroheme synthase">
    <location>
        <begin position="1"/>
        <end position="465"/>
    </location>
</feature>
<feature type="region of interest" description="Precorrin-2 dehydrogenase /sirohydrochlorin ferrochelatase" evidence="1">
    <location>
        <begin position="1"/>
        <end position="203"/>
    </location>
</feature>
<feature type="region of interest" description="Uroporphyrinogen-III C-methyltransferase" evidence="1">
    <location>
        <begin position="217"/>
        <end position="465"/>
    </location>
</feature>
<feature type="active site" description="Proton acceptor" evidence="1">
    <location>
        <position position="249"/>
    </location>
</feature>
<feature type="active site" description="Proton donor" evidence="1">
    <location>
        <position position="271"/>
    </location>
</feature>
<feature type="binding site" evidence="1">
    <location>
        <begin position="22"/>
        <end position="23"/>
    </location>
    <ligand>
        <name>NAD(+)</name>
        <dbReference type="ChEBI" id="CHEBI:57540"/>
    </ligand>
</feature>
<feature type="binding site" evidence="1">
    <location>
        <begin position="43"/>
        <end position="44"/>
    </location>
    <ligand>
        <name>NAD(+)</name>
        <dbReference type="ChEBI" id="CHEBI:57540"/>
    </ligand>
</feature>
<feature type="binding site" evidence="1">
    <location>
        <position position="226"/>
    </location>
    <ligand>
        <name>S-adenosyl-L-methionine</name>
        <dbReference type="ChEBI" id="CHEBI:59789"/>
    </ligand>
</feature>
<feature type="binding site" evidence="1">
    <location>
        <begin position="302"/>
        <end position="304"/>
    </location>
    <ligand>
        <name>S-adenosyl-L-methionine</name>
        <dbReference type="ChEBI" id="CHEBI:59789"/>
    </ligand>
</feature>
<feature type="binding site" evidence="1">
    <location>
        <position position="307"/>
    </location>
    <ligand>
        <name>S-adenosyl-L-methionine</name>
        <dbReference type="ChEBI" id="CHEBI:59789"/>
    </ligand>
</feature>
<feature type="binding site" evidence="1">
    <location>
        <begin position="332"/>
        <end position="333"/>
    </location>
    <ligand>
        <name>S-adenosyl-L-methionine</name>
        <dbReference type="ChEBI" id="CHEBI:59789"/>
    </ligand>
</feature>
<feature type="binding site" evidence="1">
    <location>
        <position position="384"/>
    </location>
    <ligand>
        <name>S-adenosyl-L-methionine</name>
        <dbReference type="ChEBI" id="CHEBI:59789"/>
    </ligand>
</feature>
<feature type="binding site" evidence="1">
    <location>
        <position position="413"/>
    </location>
    <ligand>
        <name>S-adenosyl-L-methionine</name>
        <dbReference type="ChEBI" id="CHEBI:59789"/>
    </ligand>
</feature>
<feature type="modified residue" description="Phosphoserine" evidence="1">
    <location>
        <position position="128"/>
    </location>
</feature>
<organism>
    <name type="scientific">Pseudomonas paraeruginosa (strain DSM 24068 / PA7)</name>
    <name type="common">Pseudomonas aeruginosa (strain PA7)</name>
    <dbReference type="NCBI Taxonomy" id="381754"/>
    <lineage>
        <taxon>Bacteria</taxon>
        <taxon>Pseudomonadati</taxon>
        <taxon>Pseudomonadota</taxon>
        <taxon>Gammaproteobacteria</taxon>
        <taxon>Pseudomonadales</taxon>
        <taxon>Pseudomonadaceae</taxon>
        <taxon>Pseudomonas</taxon>
        <taxon>Pseudomonas paraeruginosa</taxon>
    </lineage>
</organism>
<protein>
    <recommendedName>
        <fullName evidence="1">Siroheme synthase</fullName>
    </recommendedName>
    <domain>
        <recommendedName>
            <fullName evidence="1">Uroporphyrinogen-III C-methyltransferase</fullName>
            <shortName evidence="1">Urogen III methylase</shortName>
            <ecNumber evidence="1">2.1.1.107</ecNumber>
        </recommendedName>
        <alternativeName>
            <fullName evidence="1">SUMT</fullName>
        </alternativeName>
        <alternativeName>
            <fullName evidence="1">Uroporphyrinogen III methylase</fullName>
            <shortName evidence="1">UROM</shortName>
        </alternativeName>
    </domain>
    <domain>
        <recommendedName>
            <fullName evidence="1">Precorrin-2 dehydrogenase</fullName>
            <ecNumber evidence="1">1.3.1.76</ecNumber>
        </recommendedName>
    </domain>
    <domain>
        <recommendedName>
            <fullName evidence="1">Sirohydrochlorin ferrochelatase</fullName>
            <ecNumber evidence="1">4.99.1.4</ecNumber>
        </recommendedName>
    </domain>
</protein>
<gene>
    <name evidence="1" type="primary">cysG</name>
    <name type="ordered locus">PSPA7_2597</name>
</gene>
<name>CYSG_PSEP7</name>
<reference key="1">
    <citation type="submission" date="2007-06" db="EMBL/GenBank/DDBJ databases">
        <authorList>
            <person name="Dodson R.J."/>
            <person name="Harkins D."/>
            <person name="Paulsen I.T."/>
        </authorList>
    </citation>
    <scope>NUCLEOTIDE SEQUENCE [LARGE SCALE GENOMIC DNA]</scope>
    <source>
        <strain>DSM 24068 / PA7</strain>
    </source>
</reference>
<keyword id="KW-0169">Cobalamin biosynthesis</keyword>
<keyword id="KW-0456">Lyase</keyword>
<keyword id="KW-0489">Methyltransferase</keyword>
<keyword id="KW-0511">Multifunctional enzyme</keyword>
<keyword id="KW-0520">NAD</keyword>
<keyword id="KW-0560">Oxidoreductase</keyword>
<keyword id="KW-0597">Phosphoprotein</keyword>
<keyword id="KW-0627">Porphyrin biosynthesis</keyword>
<keyword id="KW-0949">S-adenosyl-L-methionine</keyword>
<keyword id="KW-0808">Transferase</keyword>
<accession>A6V4H6</accession>
<evidence type="ECO:0000255" key="1">
    <source>
        <dbReference type="HAMAP-Rule" id="MF_01646"/>
    </source>
</evidence>